<feature type="chain" id="PRO_0000388385" description="Probable threonine--tRNA ligase, cytoplasmic">
    <location>
        <begin position="1"/>
        <end position="634"/>
    </location>
</feature>
<feature type="domain" description="TGS" evidence="2">
    <location>
        <begin position="1"/>
        <end position="61"/>
    </location>
</feature>
<gene>
    <name type="ORF">EBI_22768</name>
</gene>
<dbReference type="EC" id="6.1.1.3"/>
<dbReference type="EMBL" id="ABGB01000017">
    <property type="protein sequence ID" value="EED44394.1"/>
    <property type="molecule type" value="Genomic_DNA"/>
</dbReference>
<dbReference type="RefSeq" id="XP_002649729.1">
    <property type="nucleotide sequence ID" value="XM_002649683.1"/>
</dbReference>
<dbReference type="SMR" id="B7XIA1"/>
<dbReference type="FunCoup" id="B7XIA1">
    <property type="interactions" value="179"/>
</dbReference>
<dbReference type="STRING" id="481877.B7XIA1"/>
<dbReference type="VEuPathDB" id="MicrosporidiaDB:EBI_22768"/>
<dbReference type="HOGENOM" id="CLU_008554_0_1_1"/>
<dbReference type="InParanoid" id="B7XIA1"/>
<dbReference type="OMA" id="WYADGMY"/>
<dbReference type="OrthoDB" id="5423599at2759"/>
<dbReference type="GO" id="GO:0005739">
    <property type="term" value="C:mitochondrion"/>
    <property type="evidence" value="ECO:0007669"/>
    <property type="project" value="TreeGrafter"/>
</dbReference>
<dbReference type="GO" id="GO:0005524">
    <property type="term" value="F:ATP binding"/>
    <property type="evidence" value="ECO:0007669"/>
    <property type="project" value="UniProtKB-KW"/>
</dbReference>
<dbReference type="GO" id="GO:0004829">
    <property type="term" value="F:threonine-tRNA ligase activity"/>
    <property type="evidence" value="ECO:0007669"/>
    <property type="project" value="UniProtKB-EC"/>
</dbReference>
<dbReference type="GO" id="GO:0006435">
    <property type="term" value="P:threonyl-tRNA aminoacylation"/>
    <property type="evidence" value="ECO:0007669"/>
    <property type="project" value="InterPro"/>
</dbReference>
<dbReference type="CDD" id="cd00771">
    <property type="entry name" value="ThrRS_core"/>
    <property type="match status" value="1"/>
</dbReference>
<dbReference type="FunFam" id="3.30.930.10:FF:000019">
    <property type="entry name" value="Threonine--tRNA ligase"/>
    <property type="match status" value="1"/>
</dbReference>
<dbReference type="FunFam" id="3.30.980.10:FF:000005">
    <property type="entry name" value="Threonyl-tRNA synthetase, mitochondrial"/>
    <property type="match status" value="1"/>
</dbReference>
<dbReference type="Gene3D" id="3.40.50.800">
    <property type="entry name" value="Anticodon-binding domain"/>
    <property type="match status" value="1"/>
</dbReference>
<dbReference type="Gene3D" id="3.30.930.10">
    <property type="entry name" value="Bira Bifunctional Protein, Domain 2"/>
    <property type="match status" value="1"/>
</dbReference>
<dbReference type="Gene3D" id="3.30.980.10">
    <property type="entry name" value="Threonyl-trna Synthetase, Chain A, domain 2"/>
    <property type="match status" value="1"/>
</dbReference>
<dbReference type="HAMAP" id="MF_00184">
    <property type="entry name" value="Thr_tRNA_synth"/>
    <property type="match status" value="1"/>
</dbReference>
<dbReference type="InterPro" id="IPR002314">
    <property type="entry name" value="aa-tRNA-synt_IIb"/>
</dbReference>
<dbReference type="InterPro" id="IPR006195">
    <property type="entry name" value="aa-tRNA-synth_II"/>
</dbReference>
<dbReference type="InterPro" id="IPR045864">
    <property type="entry name" value="aa-tRNA-synth_II/BPL/LPL"/>
</dbReference>
<dbReference type="InterPro" id="IPR004154">
    <property type="entry name" value="Anticodon-bd"/>
</dbReference>
<dbReference type="InterPro" id="IPR036621">
    <property type="entry name" value="Anticodon-bd_dom_sf"/>
</dbReference>
<dbReference type="InterPro" id="IPR004095">
    <property type="entry name" value="TGS"/>
</dbReference>
<dbReference type="InterPro" id="IPR002320">
    <property type="entry name" value="Thr-tRNA-ligase_IIa"/>
</dbReference>
<dbReference type="InterPro" id="IPR018163">
    <property type="entry name" value="Thr/Ala-tRNA-synth_IIc_edit"/>
</dbReference>
<dbReference type="InterPro" id="IPR033728">
    <property type="entry name" value="ThrRS_core"/>
</dbReference>
<dbReference type="InterPro" id="IPR012947">
    <property type="entry name" value="tRNA_SAD"/>
</dbReference>
<dbReference type="NCBIfam" id="TIGR00418">
    <property type="entry name" value="thrS"/>
    <property type="match status" value="1"/>
</dbReference>
<dbReference type="PANTHER" id="PTHR11451:SF44">
    <property type="entry name" value="THREONINE--TRNA LIGASE, CHLOROPLASTIC_MITOCHONDRIAL 2"/>
    <property type="match status" value="1"/>
</dbReference>
<dbReference type="PANTHER" id="PTHR11451">
    <property type="entry name" value="THREONINE-TRNA LIGASE"/>
    <property type="match status" value="1"/>
</dbReference>
<dbReference type="Pfam" id="PF03129">
    <property type="entry name" value="HGTP_anticodon"/>
    <property type="match status" value="1"/>
</dbReference>
<dbReference type="Pfam" id="PF00587">
    <property type="entry name" value="tRNA-synt_2b"/>
    <property type="match status" value="1"/>
</dbReference>
<dbReference type="Pfam" id="PF07973">
    <property type="entry name" value="tRNA_SAD"/>
    <property type="match status" value="1"/>
</dbReference>
<dbReference type="PRINTS" id="PR01047">
    <property type="entry name" value="TRNASYNTHTHR"/>
</dbReference>
<dbReference type="SMART" id="SM00863">
    <property type="entry name" value="tRNA_SAD"/>
    <property type="match status" value="1"/>
</dbReference>
<dbReference type="SUPFAM" id="SSF52954">
    <property type="entry name" value="Class II aaRS ABD-related"/>
    <property type="match status" value="1"/>
</dbReference>
<dbReference type="SUPFAM" id="SSF55681">
    <property type="entry name" value="Class II aaRS and biotin synthetases"/>
    <property type="match status" value="1"/>
</dbReference>
<dbReference type="SUPFAM" id="SSF55186">
    <property type="entry name" value="ThrRS/AlaRS common domain"/>
    <property type="match status" value="1"/>
</dbReference>
<dbReference type="PROSITE" id="PS50862">
    <property type="entry name" value="AA_TRNA_LIGASE_II"/>
    <property type="match status" value="1"/>
</dbReference>
<dbReference type="PROSITE" id="PS51880">
    <property type="entry name" value="TGS"/>
    <property type="match status" value="1"/>
</dbReference>
<sequence length="634" mass="74069">MSIYVTFKGQVQKICISSGTILQELISTHYPNKNIIACAIDGIMADINTEINENQKIELYDFDSKEGQHVYWHSSAHILGNALVNLYQCKLVNGPALDEGFYYDIDIERPIREEDFADIEKEMQRIINKNIDFRKKMIKKDDLLKMYKDNDYKVHFINNIPDNLISVYYNDEFYDMCQGPHIQSTGLVKAFKILKSSSCYFLNSADNQILQRIYGISFPNKTLLKEYEEKVQKAKEMDHRKIGKELNLYFFHEYSPGSCFWLPDGVVIYNRLMEFLRKEYIKRGFKEVITPNIFHIDLWKESGHYQNYKENIYGISGEDFALKPMNCPGHCIIFKSVERSYKELPLRYADFGVLHRNECSGSLTGLTRVRRFQQDDAHIFTSKSSIKEEIENAIGFLKTVYSIFNFKYELFLSTRPTKFLGTIEEWDVAEKSLKDAIIDSGHTYTLNEGDGAFYGPKIDIILHDILNRKIQCATIQLDFQLPQRFDLKFKNELGMYETPVIIHRAILGSFERFIAILIESYGKHLPFWLHPRQVGLVTIDCKHENYMYTVEKSMLNVVLDLGIRKYTDPKDTLNKKIRKATLDGCKIICILGDKEMEKNEVNVRIGNKTRTYKIEELLEKIKVSIETKKEFIFN</sequence>
<comment type="catalytic activity">
    <reaction>
        <text>tRNA(Thr) + L-threonine + ATP = L-threonyl-tRNA(Thr) + AMP + diphosphate + H(+)</text>
        <dbReference type="Rhea" id="RHEA:24624"/>
        <dbReference type="Rhea" id="RHEA-COMP:9670"/>
        <dbReference type="Rhea" id="RHEA-COMP:9704"/>
        <dbReference type="ChEBI" id="CHEBI:15378"/>
        <dbReference type="ChEBI" id="CHEBI:30616"/>
        <dbReference type="ChEBI" id="CHEBI:33019"/>
        <dbReference type="ChEBI" id="CHEBI:57926"/>
        <dbReference type="ChEBI" id="CHEBI:78442"/>
        <dbReference type="ChEBI" id="CHEBI:78534"/>
        <dbReference type="ChEBI" id="CHEBI:456215"/>
        <dbReference type="EC" id="6.1.1.3"/>
    </reaction>
</comment>
<comment type="subcellular location">
    <subcellularLocation>
        <location evidence="1">Cytoplasm</location>
    </subcellularLocation>
</comment>
<comment type="similarity">
    <text evidence="3">Belongs to the class-II aminoacyl-tRNA synthetase family.</text>
</comment>
<organism>
    <name type="scientific">Enterocytozoon bieneusi (strain H348)</name>
    <name type="common">Microsporidian parasite</name>
    <dbReference type="NCBI Taxonomy" id="481877"/>
    <lineage>
        <taxon>Eukaryota</taxon>
        <taxon>Fungi</taxon>
        <taxon>Fungi incertae sedis</taxon>
        <taxon>Microsporidia</taxon>
        <taxon>Enterocytozoonidae</taxon>
        <taxon>Enterocytozoon</taxon>
    </lineage>
</organism>
<reference key="1">
    <citation type="journal article" date="2007" name="PLoS ONE">
        <title>Patterns of genome evolution among the microsporidian parasites Encephalitozoon cuniculi, Antonospora locustae and Enterocytozoon bieneusi.</title>
        <authorList>
            <person name="Corradi N."/>
            <person name="Akiyoshi D.E."/>
            <person name="Morrison H.G."/>
            <person name="Feng X."/>
            <person name="Weiss L.M."/>
            <person name="Tzipori S."/>
            <person name="Keeling P.J."/>
        </authorList>
    </citation>
    <scope>NUCLEOTIDE SEQUENCE [LARGE SCALE GENOMIC DNA]</scope>
    <source>
        <strain>H348</strain>
    </source>
</reference>
<reference key="2">
    <citation type="journal article" date="2009" name="PLoS Pathog.">
        <title>Genomic survey of the non-cultivatable opportunistic human pathogen, Enterocytozoon bieneusi.</title>
        <authorList>
            <person name="Akiyoshi D.E."/>
            <person name="Morrison H.G."/>
            <person name="Lei S."/>
            <person name="Feng X."/>
            <person name="Zhang Q."/>
            <person name="Corradi N."/>
            <person name="Mayanja H."/>
            <person name="Tumwine J.K."/>
            <person name="Keeling P.J."/>
            <person name="Weiss L.M."/>
            <person name="Tzipori S."/>
        </authorList>
    </citation>
    <scope>NUCLEOTIDE SEQUENCE [LARGE SCALE GENOMIC DNA]</scope>
    <source>
        <strain>H348</strain>
    </source>
</reference>
<name>SYTC_ENTBH</name>
<proteinExistence type="inferred from homology"/>
<protein>
    <recommendedName>
        <fullName>Probable threonine--tRNA ligase, cytoplasmic</fullName>
        <ecNumber>6.1.1.3</ecNumber>
    </recommendedName>
    <alternativeName>
        <fullName>Threonyl-tRNA synthetase</fullName>
        <shortName>ThrRS</shortName>
    </alternativeName>
</protein>
<evidence type="ECO:0000250" key="1"/>
<evidence type="ECO:0000255" key="2">
    <source>
        <dbReference type="PROSITE-ProRule" id="PRU01228"/>
    </source>
</evidence>
<evidence type="ECO:0000305" key="3"/>
<keyword id="KW-0030">Aminoacyl-tRNA synthetase</keyword>
<keyword id="KW-0067">ATP-binding</keyword>
<keyword id="KW-0963">Cytoplasm</keyword>
<keyword id="KW-0436">Ligase</keyword>
<keyword id="KW-0547">Nucleotide-binding</keyword>
<keyword id="KW-0648">Protein biosynthesis</keyword>
<accession>B7XIA1</accession>